<proteinExistence type="inferred from homology"/>
<organism>
    <name type="scientific">Chromohalobacter salexigens (strain ATCC BAA-138 / DSM 3043 / CIP 106854 / NCIMB 13768 / 1H11)</name>
    <dbReference type="NCBI Taxonomy" id="290398"/>
    <lineage>
        <taxon>Bacteria</taxon>
        <taxon>Pseudomonadati</taxon>
        <taxon>Pseudomonadota</taxon>
        <taxon>Gammaproteobacteria</taxon>
        <taxon>Oceanospirillales</taxon>
        <taxon>Halomonadaceae</taxon>
        <taxon>Chromohalobacter</taxon>
    </lineage>
</organism>
<protein>
    <recommendedName>
        <fullName evidence="1">Small ribosomal subunit protein uS2</fullName>
    </recommendedName>
    <alternativeName>
        <fullName evidence="2">30S ribosomal protein S2</fullName>
    </alternativeName>
</protein>
<dbReference type="EMBL" id="CP000285">
    <property type="protein sequence ID" value="ABE57925.1"/>
    <property type="molecule type" value="Genomic_DNA"/>
</dbReference>
<dbReference type="RefSeq" id="WP_011505871.1">
    <property type="nucleotide sequence ID" value="NC_007963.1"/>
</dbReference>
<dbReference type="SMR" id="Q1R033"/>
<dbReference type="STRING" id="290398.Csal_0563"/>
<dbReference type="GeneID" id="95333319"/>
<dbReference type="KEGG" id="csa:Csal_0563"/>
<dbReference type="eggNOG" id="COG0052">
    <property type="taxonomic scope" value="Bacteria"/>
</dbReference>
<dbReference type="HOGENOM" id="CLU_040318_1_0_6"/>
<dbReference type="OrthoDB" id="9808036at2"/>
<dbReference type="Proteomes" id="UP000000239">
    <property type="component" value="Chromosome"/>
</dbReference>
<dbReference type="GO" id="GO:0022627">
    <property type="term" value="C:cytosolic small ribosomal subunit"/>
    <property type="evidence" value="ECO:0007669"/>
    <property type="project" value="TreeGrafter"/>
</dbReference>
<dbReference type="GO" id="GO:0003735">
    <property type="term" value="F:structural constituent of ribosome"/>
    <property type="evidence" value="ECO:0007669"/>
    <property type="project" value="InterPro"/>
</dbReference>
<dbReference type="GO" id="GO:0006412">
    <property type="term" value="P:translation"/>
    <property type="evidence" value="ECO:0007669"/>
    <property type="project" value="UniProtKB-UniRule"/>
</dbReference>
<dbReference type="CDD" id="cd01425">
    <property type="entry name" value="RPS2"/>
    <property type="match status" value="1"/>
</dbReference>
<dbReference type="FunFam" id="1.10.287.610:FF:000001">
    <property type="entry name" value="30S ribosomal protein S2"/>
    <property type="match status" value="1"/>
</dbReference>
<dbReference type="Gene3D" id="3.40.50.10490">
    <property type="entry name" value="Glucose-6-phosphate isomerase like protein, domain 1"/>
    <property type="match status" value="1"/>
</dbReference>
<dbReference type="Gene3D" id="1.10.287.610">
    <property type="entry name" value="Helix hairpin bin"/>
    <property type="match status" value="1"/>
</dbReference>
<dbReference type="HAMAP" id="MF_00291_B">
    <property type="entry name" value="Ribosomal_uS2_B"/>
    <property type="match status" value="1"/>
</dbReference>
<dbReference type="InterPro" id="IPR001865">
    <property type="entry name" value="Ribosomal_uS2"/>
</dbReference>
<dbReference type="InterPro" id="IPR005706">
    <property type="entry name" value="Ribosomal_uS2_bac/mit/plastid"/>
</dbReference>
<dbReference type="InterPro" id="IPR018130">
    <property type="entry name" value="Ribosomal_uS2_CS"/>
</dbReference>
<dbReference type="InterPro" id="IPR023591">
    <property type="entry name" value="Ribosomal_uS2_flav_dom_sf"/>
</dbReference>
<dbReference type="NCBIfam" id="TIGR01011">
    <property type="entry name" value="rpsB_bact"/>
    <property type="match status" value="1"/>
</dbReference>
<dbReference type="PANTHER" id="PTHR12534">
    <property type="entry name" value="30S RIBOSOMAL PROTEIN S2 PROKARYOTIC AND ORGANELLAR"/>
    <property type="match status" value="1"/>
</dbReference>
<dbReference type="PANTHER" id="PTHR12534:SF0">
    <property type="entry name" value="SMALL RIBOSOMAL SUBUNIT PROTEIN US2M"/>
    <property type="match status" value="1"/>
</dbReference>
<dbReference type="Pfam" id="PF00318">
    <property type="entry name" value="Ribosomal_S2"/>
    <property type="match status" value="1"/>
</dbReference>
<dbReference type="PRINTS" id="PR00395">
    <property type="entry name" value="RIBOSOMALS2"/>
</dbReference>
<dbReference type="SUPFAM" id="SSF52313">
    <property type="entry name" value="Ribosomal protein S2"/>
    <property type="match status" value="1"/>
</dbReference>
<dbReference type="PROSITE" id="PS00962">
    <property type="entry name" value="RIBOSOMAL_S2_1"/>
    <property type="match status" value="1"/>
</dbReference>
<dbReference type="PROSITE" id="PS00963">
    <property type="entry name" value="RIBOSOMAL_S2_2"/>
    <property type="match status" value="1"/>
</dbReference>
<keyword id="KW-1185">Reference proteome</keyword>
<keyword id="KW-0687">Ribonucleoprotein</keyword>
<keyword id="KW-0689">Ribosomal protein</keyword>
<evidence type="ECO:0000255" key="1">
    <source>
        <dbReference type="HAMAP-Rule" id="MF_00291"/>
    </source>
</evidence>
<evidence type="ECO:0000305" key="2"/>
<sequence length="246" mass="27349">MAQVNMRDLLKAGAHFGHQTRYWNPKMSKYIFGARNKIHIINLEHTLPALNDALAVIEKMVASNNKILFVGTKRAASKIVKEEARRAGQPFVNHRWLGGMLTNFKTIRVSIKRLRELEAMHEDGTFEKLTKKEVLMATREQDKLERSVGGIKDMGGLPDALFVVDVDHERIAINEANKLGIPVIGVVDTNSNPDGVDYVIPGNDDSIRAIQIYAQAVADVCVRAKDNSASEFVEVTETNENEAAAE</sequence>
<gene>
    <name evidence="1" type="primary">rpsB</name>
    <name type="ordered locus">Csal_0563</name>
</gene>
<comment type="similarity">
    <text evidence="1">Belongs to the universal ribosomal protein uS2 family.</text>
</comment>
<accession>Q1R033</accession>
<reference key="1">
    <citation type="journal article" date="2011" name="Stand. Genomic Sci.">
        <title>Complete genome sequence of the halophilic and highly halotolerant Chromohalobacter salexigens type strain (1H11(T)).</title>
        <authorList>
            <person name="Copeland A."/>
            <person name="O'Connor K."/>
            <person name="Lucas S."/>
            <person name="Lapidus A."/>
            <person name="Berry K.W."/>
            <person name="Detter J.C."/>
            <person name="Del Rio T.G."/>
            <person name="Hammon N."/>
            <person name="Dalin E."/>
            <person name="Tice H."/>
            <person name="Pitluck S."/>
            <person name="Bruce D."/>
            <person name="Goodwin L."/>
            <person name="Han C."/>
            <person name="Tapia R."/>
            <person name="Saunders E."/>
            <person name="Schmutz J."/>
            <person name="Brettin T."/>
            <person name="Larimer F."/>
            <person name="Land M."/>
            <person name="Hauser L."/>
            <person name="Vargas C."/>
            <person name="Nieto J.J."/>
            <person name="Kyrpides N.C."/>
            <person name="Ivanova N."/>
            <person name="Goker M."/>
            <person name="Klenk H.P."/>
            <person name="Csonka L.N."/>
            <person name="Woyke T."/>
        </authorList>
    </citation>
    <scope>NUCLEOTIDE SEQUENCE [LARGE SCALE GENOMIC DNA]</scope>
    <source>
        <strain>ATCC BAA-138 / DSM 3043 / CIP 106854 / NCIMB 13768 / 1H11</strain>
    </source>
</reference>
<feature type="chain" id="PRO_1000003930" description="Small ribosomal subunit protein uS2">
    <location>
        <begin position="1"/>
        <end position="246"/>
    </location>
</feature>
<name>RS2_CHRSD</name>